<sequence>MDVRQSIHSAHAKTLDTQGLRNEFLVEKVFVADEYTMVYSHIDRIIVGGIMPVTKTVSVGGEVGKQLGVSYFLERRELGVINIGGAGTITVDGQCYEIGHRDALYVGKGAKEVVFASIDTATPAKFYYNCAPAHTTYPTKKVTPDEVSPVTLGDNLTSNRRTINKYFVPDVLETCQLSMGLTELAPGNLWNTMPCHTHERRMEVYFYFNMDDDACVFHMMGQPQETRHIVMHNEQAVISPSWSIHSGVGTKAYTFIWGMVGENQVFDDMDHVAVKDLR</sequence>
<name>KDUI_ECOLU</name>
<comment type="function">
    <text evidence="1">Catalyzes the isomerization of 5-dehydro-4-deoxy-D-glucuronate to 3-deoxy-D-glycero-2,5-hexodiulosonate.</text>
</comment>
<comment type="catalytic activity">
    <reaction evidence="1">
        <text>5-dehydro-4-deoxy-D-glucuronate = 3-deoxy-D-glycero-2,5-hexodiulosonate</text>
        <dbReference type="Rhea" id="RHEA:23896"/>
        <dbReference type="ChEBI" id="CHEBI:17117"/>
        <dbReference type="ChEBI" id="CHEBI:29071"/>
        <dbReference type="EC" id="5.3.1.17"/>
    </reaction>
</comment>
<comment type="cofactor">
    <cofactor evidence="1">
        <name>Zn(2+)</name>
        <dbReference type="ChEBI" id="CHEBI:29105"/>
    </cofactor>
    <text evidence="1">Binds 1 zinc ion per subunit.</text>
</comment>
<comment type="pathway">
    <text evidence="1">Glycan metabolism; pectin degradation; 2-dehydro-3-deoxy-D-gluconate from pectin: step 4/5.</text>
</comment>
<comment type="subunit">
    <text evidence="1">Homohexamer.</text>
</comment>
<comment type="similarity">
    <text evidence="1">Belongs to the KduI family.</text>
</comment>
<gene>
    <name evidence="1" type="primary">kduI</name>
    <name type="ordered locus">ECUMN_3171</name>
</gene>
<proteinExistence type="inferred from homology"/>
<reference key="1">
    <citation type="journal article" date="2009" name="PLoS Genet.">
        <title>Organised genome dynamics in the Escherichia coli species results in highly diverse adaptive paths.</title>
        <authorList>
            <person name="Touchon M."/>
            <person name="Hoede C."/>
            <person name="Tenaillon O."/>
            <person name="Barbe V."/>
            <person name="Baeriswyl S."/>
            <person name="Bidet P."/>
            <person name="Bingen E."/>
            <person name="Bonacorsi S."/>
            <person name="Bouchier C."/>
            <person name="Bouvet O."/>
            <person name="Calteau A."/>
            <person name="Chiapello H."/>
            <person name="Clermont O."/>
            <person name="Cruveiller S."/>
            <person name="Danchin A."/>
            <person name="Diard M."/>
            <person name="Dossat C."/>
            <person name="Karoui M.E."/>
            <person name="Frapy E."/>
            <person name="Garry L."/>
            <person name="Ghigo J.M."/>
            <person name="Gilles A.M."/>
            <person name="Johnson J."/>
            <person name="Le Bouguenec C."/>
            <person name="Lescat M."/>
            <person name="Mangenot S."/>
            <person name="Martinez-Jehanne V."/>
            <person name="Matic I."/>
            <person name="Nassif X."/>
            <person name="Oztas S."/>
            <person name="Petit M.A."/>
            <person name="Pichon C."/>
            <person name="Rouy Z."/>
            <person name="Ruf C.S."/>
            <person name="Schneider D."/>
            <person name="Tourret J."/>
            <person name="Vacherie B."/>
            <person name="Vallenet D."/>
            <person name="Medigue C."/>
            <person name="Rocha E.P.C."/>
            <person name="Denamur E."/>
        </authorList>
    </citation>
    <scope>NUCLEOTIDE SEQUENCE [LARGE SCALE GENOMIC DNA]</scope>
    <source>
        <strain>UMN026 / ExPEC</strain>
    </source>
</reference>
<evidence type="ECO:0000255" key="1">
    <source>
        <dbReference type="HAMAP-Rule" id="MF_00687"/>
    </source>
</evidence>
<feature type="chain" id="PRO_1000131883" description="4-deoxy-L-threo-5-hexosulose-uronate ketol-isomerase">
    <location>
        <begin position="1"/>
        <end position="278"/>
    </location>
</feature>
<feature type="binding site" evidence="1">
    <location>
        <position position="196"/>
    </location>
    <ligand>
        <name>Zn(2+)</name>
        <dbReference type="ChEBI" id="CHEBI:29105"/>
    </ligand>
</feature>
<feature type="binding site" evidence="1">
    <location>
        <position position="198"/>
    </location>
    <ligand>
        <name>Zn(2+)</name>
        <dbReference type="ChEBI" id="CHEBI:29105"/>
    </ligand>
</feature>
<feature type="binding site" evidence="1">
    <location>
        <position position="203"/>
    </location>
    <ligand>
        <name>Zn(2+)</name>
        <dbReference type="ChEBI" id="CHEBI:29105"/>
    </ligand>
</feature>
<feature type="binding site" evidence="1">
    <location>
        <position position="245"/>
    </location>
    <ligand>
        <name>Zn(2+)</name>
        <dbReference type="ChEBI" id="CHEBI:29105"/>
    </ligand>
</feature>
<protein>
    <recommendedName>
        <fullName evidence="1">4-deoxy-L-threo-5-hexosulose-uronate ketol-isomerase</fullName>
        <ecNumber evidence="1">5.3.1.17</ecNumber>
    </recommendedName>
    <alternativeName>
        <fullName evidence="1">5-keto-4-deoxyuronate isomerase</fullName>
    </alternativeName>
    <alternativeName>
        <fullName evidence="1">DKI isomerase</fullName>
    </alternativeName>
</protein>
<organism>
    <name type="scientific">Escherichia coli O17:K52:H18 (strain UMN026 / ExPEC)</name>
    <dbReference type="NCBI Taxonomy" id="585056"/>
    <lineage>
        <taxon>Bacteria</taxon>
        <taxon>Pseudomonadati</taxon>
        <taxon>Pseudomonadota</taxon>
        <taxon>Gammaproteobacteria</taxon>
        <taxon>Enterobacterales</taxon>
        <taxon>Enterobacteriaceae</taxon>
        <taxon>Escherichia</taxon>
    </lineage>
</organism>
<accession>B7N775</accession>
<dbReference type="EC" id="5.3.1.17" evidence="1"/>
<dbReference type="EMBL" id="CU928163">
    <property type="protein sequence ID" value="CAR14336.1"/>
    <property type="molecule type" value="Genomic_DNA"/>
</dbReference>
<dbReference type="RefSeq" id="WP_000383248.1">
    <property type="nucleotide sequence ID" value="NC_011751.1"/>
</dbReference>
<dbReference type="RefSeq" id="YP_002413856.1">
    <property type="nucleotide sequence ID" value="NC_011751.1"/>
</dbReference>
<dbReference type="SMR" id="B7N775"/>
<dbReference type="STRING" id="585056.ECUMN_3171"/>
<dbReference type="GeneID" id="75172927"/>
<dbReference type="KEGG" id="eum:ECUMN_3171"/>
<dbReference type="PATRIC" id="fig|585056.7.peg.3352"/>
<dbReference type="HOGENOM" id="CLU_062609_0_0_6"/>
<dbReference type="UniPathway" id="UPA00545">
    <property type="reaction ID" value="UER00826"/>
</dbReference>
<dbReference type="Proteomes" id="UP000007097">
    <property type="component" value="Chromosome"/>
</dbReference>
<dbReference type="GO" id="GO:0008697">
    <property type="term" value="F:4-deoxy-L-threo-5-hexosulose-uronate ketol-isomerase activity"/>
    <property type="evidence" value="ECO:0007669"/>
    <property type="project" value="UniProtKB-UniRule"/>
</dbReference>
<dbReference type="GO" id="GO:0008270">
    <property type="term" value="F:zinc ion binding"/>
    <property type="evidence" value="ECO:0007669"/>
    <property type="project" value="UniProtKB-UniRule"/>
</dbReference>
<dbReference type="GO" id="GO:0019698">
    <property type="term" value="P:D-galacturonate catabolic process"/>
    <property type="evidence" value="ECO:0007669"/>
    <property type="project" value="TreeGrafter"/>
</dbReference>
<dbReference type="GO" id="GO:0042840">
    <property type="term" value="P:D-glucuronate catabolic process"/>
    <property type="evidence" value="ECO:0007669"/>
    <property type="project" value="TreeGrafter"/>
</dbReference>
<dbReference type="GO" id="GO:0045490">
    <property type="term" value="P:pectin catabolic process"/>
    <property type="evidence" value="ECO:0007669"/>
    <property type="project" value="UniProtKB-UniRule"/>
</dbReference>
<dbReference type="CDD" id="cd20491">
    <property type="entry name" value="cupin_KduI_C"/>
    <property type="match status" value="1"/>
</dbReference>
<dbReference type="CDD" id="cd20294">
    <property type="entry name" value="cupin_KduI_N"/>
    <property type="match status" value="1"/>
</dbReference>
<dbReference type="FunFam" id="2.60.120.10:FF:000018">
    <property type="entry name" value="4-deoxy-L-threo-5-hexosulose-uronate ketol-isomerase"/>
    <property type="match status" value="1"/>
</dbReference>
<dbReference type="FunFam" id="2.60.120.520:FF:000001">
    <property type="entry name" value="4-deoxy-L-threo-5-hexosulose-uronate ketol-isomerase"/>
    <property type="match status" value="1"/>
</dbReference>
<dbReference type="Gene3D" id="2.60.120.10">
    <property type="entry name" value="Jelly Rolls"/>
    <property type="match status" value="1"/>
</dbReference>
<dbReference type="Gene3D" id="2.60.120.520">
    <property type="entry name" value="pectin degrading enzyme 5-keto 4- deoxyuronate isomerase, domain 1"/>
    <property type="match status" value="1"/>
</dbReference>
<dbReference type="HAMAP" id="MF_00687">
    <property type="entry name" value="KduI"/>
    <property type="match status" value="1"/>
</dbReference>
<dbReference type="InterPro" id="IPR007045">
    <property type="entry name" value="KduI"/>
</dbReference>
<dbReference type="InterPro" id="IPR021120">
    <property type="entry name" value="KduI/IolB_isomerase"/>
</dbReference>
<dbReference type="InterPro" id="IPR027449">
    <property type="entry name" value="KduI_N"/>
</dbReference>
<dbReference type="InterPro" id="IPR014710">
    <property type="entry name" value="RmlC-like_jellyroll"/>
</dbReference>
<dbReference type="InterPro" id="IPR011051">
    <property type="entry name" value="RmlC_Cupin_sf"/>
</dbReference>
<dbReference type="NCBIfam" id="NF002091">
    <property type="entry name" value="PRK00924.1"/>
    <property type="match status" value="1"/>
</dbReference>
<dbReference type="PANTHER" id="PTHR38461">
    <property type="entry name" value="4-DEOXY-L-THREO-5-HEXOSULOSE-URONATE KETOL-ISOMERASE"/>
    <property type="match status" value="1"/>
</dbReference>
<dbReference type="PANTHER" id="PTHR38461:SF1">
    <property type="entry name" value="4-DEOXY-L-THREO-5-HEXOSULOSE-URONATE KETOL-ISOMERASE"/>
    <property type="match status" value="1"/>
</dbReference>
<dbReference type="Pfam" id="PF04962">
    <property type="entry name" value="KduI"/>
    <property type="match status" value="1"/>
</dbReference>
<dbReference type="PIRSF" id="PIRSF006625">
    <property type="entry name" value="KduI"/>
    <property type="match status" value="1"/>
</dbReference>
<dbReference type="SUPFAM" id="SSF51182">
    <property type="entry name" value="RmlC-like cupins"/>
    <property type="match status" value="1"/>
</dbReference>
<keyword id="KW-0413">Isomerase</keyword>
<keyword id="KW-0479">Metal-binding</keyword>
<keyword id="KW-0862">Zinc</keyword>